<gene>
    <name evidence="1" type="primary">atpF</name>
    <name type="ordered locus">MS2350</name>
</gene>
<protein>
    <recommendedName>
        <fullName evidence="1">ATP synthase subunit b</fullName>
    </recommendedName>
    <alternativeName>
        <fullName evidence="1">ATP synthase F(0) sector subunit b</fullName>
    </alternativeName>
    <alternativeName>
        <fullName evidence="1">ATPase subunit I</fullName>
    </alternativeName>
    <alternativeName>
        <fullName evidence="1">F-type ATPase subunit b</fullName>
        <shortName evidence="1">F-ATPase subunit b</shortName>
    </alternativeName>
</protein>
<reference key="1">
    <citation type="journal article" date="2004" name="Nat. Biotechnol.">
        <title>The genome sequence of the capnophilic rumen bacterium Mannheimia succiniciproducens.</title>
        <authorList>
            <person name="Hong S.H."/>
            <person name="Kim J.S."/>
            <person name="Lee S.Y."/>
            <person name="In Y.H."/>
            <person name="Choi S.S."/>
            <person name="Rih J.-K."/>
            <person name="Kim C.H."/>
            <person name="Jeong H."/>
            <person name="Hur C.G."/>
            <person name="Kim J.J."/>
        </authorList>
    </citation>
    <scope>NUCLEOTIDE SEQUENCE [LARGE SCALE GENOMIC DNA]</scope>
    <source>
        <strain>KCTC 0769BP / MBEL55E</strain>
    </source>
</reference>
<keyword id="KW-0066">ATP synthesis</keyword>
<keyword id="KW-0997">Cell inner membrane</keyword>
<keyword id="KW-1003">Cell membrane</keyword>
<keyword id="KW-0138">CF(0)</keyword>
<keyword id="KW-0375">Hydrogen ion transport</keyword>
<keyword id="KW-0406">Ion transport</keyword>
<keyword id="KW-0472">Membrane</keyword>
<keyword id="KW-0812">Transmembrane</keyword>
<keyword id="KW-1133">Transmembrane helix</keyword>
<keyword id="KW-0813">Transport</keyword>
<organism>
    <name type="scientific">Mannheimia succiniciproducens (strain KCTC 0769BP / MBEL55E)</name>
    <dbReference type="NCBI Taxonomy" id="221988"/>
    <lineage>
        <taxon>Bacteria</taxon>
        <taxon>Pseudomonadati</taxon>
        <taxon>Pseudomonadota</taxon>
        <taxon>Gammaproteobacteria</taxon>
        <taxon>Pasteurellales</taxon>
        <taxon>Pasteurellaceae</taxon>
        <taxon>Basfia</taxon>
    </lineage>
</organism>
<proteinExistence type="inferred from homology"/>
<sequence>MNLNATLIGQLIAFALFTWFCVKFVWPPIIKAIEERQSSIANALASAEKAKQDQADSQAAVEQEILAAKEEAQKIIDLANKRRNDILEEVKTEAENLKATIIAQGHAEVEAERKRVQEELRVKVASLAIAGAEKIVGRTVDEAANNDIIDKLVAEL</sequence>
<evidence type="ECO:0000255" key="1">
    <source>
        <dbReference type="HAMAP-Rule" id="MF_01398"/>
    </source>
</evidence>
<name>ATPF_MANSM</name>
<feature type="chain" id="PRO_0000368573" description="ATP synthase subunit b">
    <location>
        <begin position="1"/>
        <end position="156"/>
    </location>
</feature>
<feature type="transmembrane region" description="Helical" evidence="1">
    <location>
        <begin position="7"/>
        <end position="29"/>
    </location>
</feature>
<comment type="function">
    <text evidence="1">F(1)F(0) ATP synthase produces ATP from ADP in the presence of a proton or sodium gradient. F-type ATPases consist of two structural domains, F(1) containing the extramembraneous catalytic core and F(0) containing the membrane proton channel, linked together by a central stalk and a peripheral stalk. During catalysis, ATP synthesis in the catalytic domain of F(1) is coupled via a rotary mechanism of the central stalk subunits to proton translocation.</text>
</comment>
<comment type="function">
    <text evidence="1">Component of the F(0) channel, it forms part of the peripheral stalk, linking F(1) to F(0).</text>
</comment>
<comment type="subunit">
    <text evidence="1">F-type ATPases have 2 components, F(1) - the catalytic core - and F(0) - the membrane proton channel. F(1) has five subunits: alpha(3), beta(3), gamma(1), delta(1), epsilon(1). F(0) has three main subunits: a(1), b(2) and c(10-14). The alpha and beta chains form an alternating ring which encloses part of the gamma chain. F(1) is attached to F(0) by a central stalk formed by the gamma and epsilon chains, while a peripheral stalk is formed by the delta and b chains.</text>
</comment>
<comment type="subcellular location">
    <subcellularLocation>
        <location evidence="1">Cell inner membrane</location>
        <topology evidence="1">Single-pass membrane protein</topology>
    </subcellularLocation>
</comment>
<comment type="similarity">
    <text evidence="1">Belongs to the ATPase B chain family.</text>
</comment>
<accession>Q65Q03</accession>
<dbReference type="EMBL" id="AE016827">
    <property type="protein sequence ID" value="AAU38957.1"/>
    <property type="molecule type" value="Genomic_DNA"/>
</dbReference>
<dbReference type="RefSeq" id="WP_011201495.1">
    <property type="nucleotide sequence ID" value="NC_006300.1"/>
</dbReference>
<dbReference type="SMR" id="Q65Q03"/>
<dbReference type="STRING" id="221988.MS2350"/>
<dbReference type="KEGG" id="msu:MS2350"/>
<dbReference type="eggNOG" id="COG0711">
    <property type="taxonomic scope" value="Bacteria"/>
</dbReference>
<dbReference type="HOGENOM" id="CLU_079215_4_5_6"/>
<dbReference type="OrthoDB" id="9788020at2"/>
<dbReference type="Proteomes" id="UP000000607">
    <property type="component" value="Chromosome"/>
</dbReference>
<dbReference type="GO" id="GO:0005886">
    <property type="term" value="C:plasma membrane"/>
    <property type="evidence" value="ECO:0007669"/>
    <property type="project" value="UniProtKB-SubCell"/>
</dbReference>
<dbReference type="GO" id="GO:0045259">
    <property type="term" value="C:proton-transporting ATP synthase complex"/>
    <property type="evidence" value="ECO:0007669"/>
    <property type="project" value="UniProtKB-KW"/>
</dbReference>
<dbReference type="GO" id="GO:0046933">
    <property type="term" value="F:proton-transporting ATP synthase activity, rotational mechanism"/>
    <property type="evidence" value="ECO:0007669"/>
    <property type="project" value="UniProtKB-UniRule"/>
</dbReference>
<dbReference type="GO" id="GO:0046961">
    <property type="term" value="F:proton-transporting ATPase activity, rotational mechanism"/>
    <property type="evidence" value="ECO:0007669"/>
    <property type="project" value="TreeGrafter"/>
</dbReference>
<dbReference type="CDD" id="cd06503">
    <property type="entry name" value="ATP-synt_Fo_b"/>
    <property type="match status" value="1"/>
</dbReference>
<dbReference type="FunFam" id="1.20.5.620:FF:000001">
    <property type="entry name" value="ATP synthase subunit b"/>
    <property type="match status" value="1"/>
</dbReference>
<dbReference type="Gene3D" id="1.20.5.620">
    <property type="entry name" value="F1F0 ATP synthase subunit B, membrane domain"/>
    <property type="match status" value="1"/>
</dbReference>
<dbReference type="HAMAP" id="MF_01398">
    <property type="entry name" value="ATP_synth_b_bprime"/>
    <property type="match status" value="1"/>
</dbReference>
<dbReference type="InterPro" id="IPR028987">
    <property type="entry name" value="ATP_synth_B-like_membr_sf"/>
</dbReference>
<dbReference type="InterPro" id="IPR002146">
    <property type="entry name" value="ATP_synth_b/b'su_bac/chlpt"/>
</dbReference>
<dbReference type="InterPro" id="IPR005864">
    <property type="entry name" value="ATP_synth_F0_bsu_bac"/>
</dbReference>
<dbReference type="InterPro" id="IPR050059">
    <property type="entry name" value="ATP_synthase_B_chain"/>
</dbReference>
<dbReference type="NCBIfam" id="TIGR01144">
    <property type="entry name" value="ATP_synt_b"/>
    <property type="match status" value="1"/>
</dbReference>
<dbReference type="NCBIfam" id="NF004411">
    <property type="entry name" value="PRK05759.1-2"/>
    <property type="match status" value="1"/>
</dbReference>
<dbReference type="NCBIfam" id="NF004413">
    <property type="entry name" value="PRK05759.1-4"/>
    <property type="match status" value="1"/>
</dbReference>
<dbReference type="PANTHER" id="PTHR33445:SF1">
    <property type="entry name" value="ATP SYNTHASE SUBUNIT B"/>
    <property type="match status" value="1"/>
</dbReference>
<dbReference type="PANTHER" id="PTHR33445">
    <property type="entry name" value="ATP SYNTHASE SUBUNIT B', CHLOROPLASTIC"/>
    <property type="match status" value="1"/>
</dbReference>
<dbReference type="Pfam" id="PF00430">
    <property type="entry name" value="ATP-synt_B"/>
    <property type="match status" value="1"/>
</dbReference>
<dbReference type="SUPFAM" id="SSF81573">
    <property type="entry name" value="F1F0 ATP synthase subunit B, membrane domain"/>
    <property type="match status" value="1"/>
</dbReference>